<feature type="chain" id="PRO_0000293604" description="UPF0232 protein MSMEG_0004/MSMEI_0006">
    <location>
        <begin position="1"/>
        <end position="194"/>
    </location>
</feature>
<feature type="region of interest" description="Disordered" evidence="1">
    <location>
        <begin position="1"/>
        <end position="81"/>
    </location>
</feature>
<feature type="compositionally biased region" description="Acidic residues" evidence="1">
    <location>
        <begin position="1"/>
        <end position="14"/>
    </location>
</feature>
<feature type="compositionally biased region" description="Basic and acidic residues" evidence="1">
    <location>
        <begin position="30"/>
        <end position="52"/>
    </location>
</feature>
<feature type="sequence conflict" description="In Ref. 1; CAA63916." evidence="2" ref="1">
    <original>AARSQGKDVGRG</original>
    <variation>RTQPGQGCPRR</variation>
    <location>
        <begin position="42"/>
        <end position="53"/>
    </location>
</feature>
<feature type="sequence conflict" description="In Ref. 1; CAA63916." evidence="2" ref="1">
    <original>RRVGGNRRRRTWSGPGPDA</original>
    <variation>PSWREPQAQNLVGAGTRC</variation>
    <location>
        <begin position="59"/>
        <end position="77"/>
    </location>
</feature>
<accession>A0QND9</accession>
<accession>I7G124</accession>
<accession>Q50408</accession>
<accession>Q50434</accession>
<proteinExistence type="inferred from homology"/>
<name>Y004_MYCS2</name>
<organism>
    <name type="scientific">Mycolicibacterium smegmatis (strain ATCC 700084 / mc(2)155)</name>
    <name type="common">Mycobacterium smegmatis</name>
    <dbReference type="NCBI Taxonomy" id="246196"/>
    <lineage>
        <taxon>Bacteria</taxon>
        <taxon>Bacillati</taxon>
        <taxon>Actinomycetota</taxon>
        <taxon>Actinomycetes</taxon>
        <taxon>Mycobacteriales</taxon>
        <taxon>Mycobacteriaceae</taxon>
        <taxon>Mycolicibacterium</taxon>
    </lineage>
</organism>
<evidence type="ECO:0000256" key="1">
    <source>
        <dbReference type="SAM" id="MobiDB-lite"/>
    </source>
</evidence>
<evidence type="ECO:0000305" key="2"/>
<comment type="similarity">
    <text evidence="2">Belongs to the UPF0232 family.</text>
</comment>
<sequence>MTGPFDDDGPEEDAPVPAPPDHLAGLRGIDLVRRTLEEARGAARSQGKDVGRGRSGPARRVGGNRRRRTWSGPGPDARDPQLLGAVTQDLAKSRGWSARVAEGSVIGRWRAVVGDQIADHATPTALNEGVLTVTAESTAWATQLRMVQSQLLAKIAAVVGDGVVTTLKIVGPAGPSWRKGRYHVSGRGPRDTYG</sequence>
<protein>
    <recommendedName>
        <fullName>UPF0232 protein MSMEG_0004/MSMEI_0006</fullName>
    </recommendedName>
</protein>
<dbReference type="EMBL" id="X94224">
    <property type="protein sequence ID" value="CAA63916.1"/>
    <property type="molecule type" value="Genomic_DNA"/>
</dbReference>
<dbReference type="EMBL" id="CP000480">
    <property type="protein sequence ID" value="ABK73076.1"/>
    <property type="molecule type" value="Genomic_DNA"/>
</dbReference>
<dbReference type="EMBL" id="CP001663">
    <property type="protein sequence ID" value="AFP36491.1"/>
    <property type="molecule type" value="Genomic_DNA"/>
</dbReference>
<dbReference type="RefSeq" id="WP_011726604.1">
    <property type="nucleotide sequence ID" value="NZ_SIJM01000001.1"/>
</dbReference>
<dbReference type="RefSeq" id="YP_884427.1">
    <property type="nucleotide sequence ID" value="NC_008596.1"/>
</dbReference>
<dbReference type="SMR" id="A0QND9"/>
<dbReference type="STRING" id="246196.MSMEG_0004"/>
<dbReference type="PaxDb" id="246196-MSMEI_0006"/>
<dbReference type="KEGG" id="msb:LJ00_00020"/>
<dbReference type="KEGG" id="msg:MSMEI_0006"/>
<dbReference type="KEGG" id="msm:MSMEG_0004"/>
<dbReference type="PATRIC" id="fig|246196.19.peg.4"/>
<dbReference type="eggNOG" id="COG5512">
    <property type="taxonomic scope" value="Bacteria"/>
</dbReference>
<dbReference type="OrthoDB" id="5516926at2"/>
<dbReference type="Proteomes" id="UP000000757">
    <property type="component" value="Chromosome"/>
</dbReference>
<dbReference type="Proteomes" id="UP000006158">
    <property type="component" value="Chromosome"/>
</dbReference>
<dbReference type="HAMAP" id="MF_00630">
    <property type="entry name" value="UPF0232"/>
    <property type="match status" value="1"/>
</dbReference>
<dbReference type="InterPro" id="IPR007922">
    <property type="entry name" value="DciA-like"/>
</dbReference>
<dbReference type="InterPro" id="IPR023007">
    <property type="entry name" value="UPF0232_actinobac"/>
</dbReference>
<dbReference type="NCBIfam" id="NF002871">
    <property type="entry name" value="PRK03195.1"/>
    <property type="match status" value="1"/>
</dbReference>
<dbReference type="PANTHER" id="PTHR36456">
    <property type="entry name" value="UPF0232 PROTEIN SCO3875"/>
    <property type="match status" value="1"/>
</dbReference>
<dbReference type="PANTHER" id="PTHR36456:SF1">
    <property type="entry name" value="UPF0232 PROTEIN SCO3875"/>
    <property type="match status" value="1"/>
</dbReference>
<dbReference type="Pfam" id="PF05258">
    <property type="entry name" value="DciA"/>
    <property type="match status" value="1"/>
</dbReference>
<gene>
    <name type="ordered locus">MSMEG_0004</name>
    <name type="ordered locus">MSMEI_0006</name>
</gene>
<reference key="1">
    <citation type="journal article" date="1996" name="Antimicrob. Agents Chemother.">
        <title>Sequence analysis, purification, and study of inhibition by 4-quinolones of the DNA gyrase from Mycobacterium smegmatis.</title>
        <authorList>
            <person name="Revel-Viravau V."/>
            <person name="Truong Q.C."/>
            <person name="Moreau N."/>
            <person name="Jarlier V."/>
            <person name="Sougakoff W."/>
        </authorList>
    </citation>
    <scope>NUCLEOTIDE SEQUENCE [GENOMIC DNA]</scope>
</reference>
<reference key="2">
    <citation type="submission" date="2006-10" db="EMBL/GenBank/DDBJ databases">
        <authorList>
            <person name="Fleischmann R.D."/>
            <person name="Dodson R.J."/>
            <person name="Haft D.H."/>
            <person name="Merkel J.S."/>
            <person name="Nelson W.C."/>
            <person name="Fraser C.M."/>
        </authorList>
    </citation>
    <scope>NUCLEOTIDE SEQUENCE [LARGE SCALE GENOMIC DNA]</scope>
    <source>
        <strain>ATCC 700084 / mc(2)155</strain>
    </source>
</reference>
<reference key="3">
    <citation type="journal article" date="2007" name="Genome Biol.">
        <title>Interrupted coding sequences in Mycobacterium smegmatis: authentic mutations or sequencing errors?</title>
        <authorList>
            <person name="Deshayes C."/>
            <person name="Perrodou E."/>
            <person name="Gallien S."/>
            <person name="Euphrasie D."/>
            <person name="Schaeffer C."/>
            <person name="Van-Dorsselaer A."/>
            <person name="Poch O."/>
            <person name="Lecompte O."/>
            <person name="Reyrat J.-M."/>
        </authorList>
    </citation>
    <scope>NUCLEOTIDE SEQUENCE [LARGE SCALE GENOMIC DNA]</scope>
    <source>
        <strain>ATCC 700084 / mc(2)155</strain>
    </source>
</reference>
<reference key="4">
    <citation type="journal article" date="2009" name="Genome Res.">
        <title>Ortho-proteogenomics: multiple proteomes investigation through orthology and a new MS-based protocol.</title>
        <authorList>
            <person name="Gallien S."/>
            <person name="Perrodou E."/>
            <person name="Carapito C."/>
            <person name="Deshayes C."/>
            <person name="Reyrat J.-M."/>
            <person name="Van Dorsselaer A."/>
            <person name="Poch O."/>
            <person name="Schaeffer C."/>
            <person name="Lecompte O."/>
        </authorList>
    </citation>
    <scope>NUCLEOTIDE SEQUENCE [LARGE SCALE GENOMIC DNA]</scope>
    <source>
        <strain>ATCC 700084 / mc(2)155</strain>
    </source>
</reference>
<keyword id="KW-1185">Reference proteome</keyword>